<protein>
    <recommendedName>
        <fullName evidence="1">Hypertrehalosaemic factor</fullName>
    </recommendedName>
    <alternativeName>
        <fullName evidence="4">Adipokinetic hormone 1</fullName>
        <shortName evidence="4">SheLa-AKH-1</shortName>
    </alternativeName>
    <alternativeName>
        <fullName evidence="1">Hypertrehalosaemic neuropeptide</fullName>
    </alternativeName>
</protein>
<comment type="function">
    <text evidence="5">Hypertrehalosaemic factors are neuropeptides that elevate the level of trehalose in the hemolymph (trehalose is the major carbohydrate in the hemolymph of insects).</text>
</comment>
<comment type="subcellular location">
    <subcellularLocation>
        <location evidence="5">Secreted</location>
    </subcellularLocation>
</comment>
<comment type="similarity">
    <text evidence="2">Belongs to the AKH/HRTH/RPCH family.</text>
</comment>
<evidence type="ECO:0000250" key="1">
    <source>
        <dbReference type="UniProtKB" id="P67790"/>
    </source>
</evidence>
<evidence type="ECO:0000255" key="2"/>
<evidence type="ECO:0000269" key="3">
    <source>
    </source>
</evidence>
<evidence type="ECO:0000303" key="4">
    <source>
    </source>
</evidence>
<evidence type="ECO:0000305" key="5"/>
<proteinExistence type="evidence at protein level"/>
<reference evidence="5" key="1">
    <citation type="journal article" date="2009" name="BMC Evol. Biol.">
        <title>A proteomic approach for studying insect phylogeny: CAPA peptides of ancient insect taxa (Dictyoptera, Blattoptera) as a test case.</title>
        <authorList>
            <person name="Roth S."/>
            <person name="Fromm B."/>
            <person name="Gaede G."/>
            <person name="Predel R."/>
        </authorList>
    </citation>
    <scope>PROTEIN SEQUENCE</scope>
    <scope>PYROGLUTAMATE FORMATION AT GLN-1</scope>
    <scope>AMIDATION AT TRP-8</scope>
    <source>
        <tissue evidence="3">Corpora cardiaca</tissue>
    </source>
</reference>
<keyword id="KW-0027">Amidation</keyword>
<keyword id="KW-0903">Direct protein sequencing</keyword>
<keyword id="KW-0372">Hormone</keyword>
<keyword id="KW-0527">Neuropeptide</keyword>
<keyword id="KW-0873">Pyrrolidone carboxylic acid</keyword>
<keyword id="KW-0964">Secreted</keyword>
<organism>
    <name type="scientific">Shelfordella lateralis</name>
    <name type="common">Turkestan cockroach</name>
    <name type="synonym">Periplaneta lateralis</name>
    <dbReference type="NCBI Taxonomy" id="36981"/>
    <lineage>
        <taxon>Eukaryota</taxon>
        <taxon>Metazoa</taxon>
        <taxon>Ecdysozoa</taxon>
        <taxon>Arthropoda</taxon>
        <taxon>Hexapoda</taxon>
        <taxon>Insecta</taxon>
        <taxon>Pterygota</taxon>
        <taxon>Neoptera</taxon>
        <taxon>Polyneoptera</taxon>
        <taxon>Dictyoptera</taxon>
        <taxon>Blattodea</taxon>
        <taxon>Blattoidea</taxon>
        <taxon>Blattidae</taxon>
        <taxon>Blattinae</taxon>
        <taxon>Periplaneta</taxon>
    </lineage>
</organism>
<dbReference type="GO" id="GO:0005576">
    <property type="term" value="C:extracellular region"/>
    <property type="evidence" value="ECO:0007669"/>
    <property type="project" value="UniProtKB-SubCell"/>
</dbReference>
<dbReference type="GO" id="GO:0005179">
    <property type="term" value="F:hormone activity"/>
    <property type="evidence" value="ECO:0007669"/>
    <property type="project" value="UniProtKB-KW"/>
</dbReference>
<dbReference type="GO" id="GO:0007218">
    <property type="term" value="P:neuropeptide signaling pathway"/>
    <property type="evidence" value="ECO:0007669"/>
    <property type="project" value="UniProtKB-KW"/>
</dbReference>
<dbReference type="InterPro" id="IPR002047">
    <property type="entry name" value="Adipokinetic_hormone_CS"/>
</dbReference>
<dbReference type="PROSITE" id="PS00256">
    <property type="entry name" value="AKH"/>
    <property type="match status" value="1"/>
</dbReference>
<name>HTF_SHELA</name>
<sequence>QVNFSPNW</sequence>
<accession>P85855</accession>
<feature type="peptide" id="PRO_0000378673" description="Hypertrehalosaemic factor" evidence="3">
    <location>
        <begin position="1"/>
        <end position="8"/>
    </location>
</feature>
<feature type="modified residue" description="Pyrrolidone carboxylic acid" evidence="3">
    <location>
        <position position="1"/>
    </location>
</feature>
<feature type="modified residue" description="Tryptophan amide" evidence="3">
    <location>
        <position position="8"/>
    </location>
</feature>